<sequence length="374" mass="40645">MQHESPIKRRPSTRIYVGDVPIGDGAPIAVQSMTNTRTTDVAATVAQIKSLEKVGADIVRVSVPTMEAAEAFKLIKQQVSVPLVADIHFDYRIALKVAEYGVDCLRINPGNIGNEARIRSVVDCARDKGIPIRIGVNGGSLEKDLQLKYGEPTPEALVESAMRHVDILDRLNFDQFKVSVKASDVFLAVDSYRLLAKKIDQPLHLGITEAGGARAGSVKSAVGLGMLLAEGIGDTLRISLAADPVEEIKVGFDILKSLRIRSRGINFIACPSCSRQEFDVIGTVNALEQRLEDVLTPMDVSIIGCVVNGPGEAEVSHLGLAGSNKKSAFYEDGVRQKERFDNDDLVAQLEAKIRAKAARLDEKNRIDIKHVEQD</sequence>
<reference key="1">
    <citation type="journal article" date="2000" name="Nature">
        <title>DNA sequence of both chromosomes of the cholera pathogen Vibrio cholerae.</title>
        <authorList>
            <person name="Heidelberg J.F."/>
            <person name="Eisen J.A."/>
            <person name="Nelson W.C."/>
            <person name="Clayton R.A."/>
            <person name="Gwinn M.L."/>
            <person name="Dodson R.J."/>
            <person name="Haft D.H."/>
            <person name="Hickey E.K."/>
            <person name="Peterson J.D."/>
            <person name="Umayam L.A."/>
            <person name="Gill S.R."/>
            <person name="Nelson K.E."/>
            <person name="Read T.D."/>
            <person name="Tettelin H."/>
            <person name="Richardson D.L."/>
            <person name="Ermolaeva M.D."/>
            <person name="Vamathevan J.J."/>
            <person name="Bass S."/>
            <person name="Qin H."/>
            <person name="Dragoi I."/>
            <person name="Sellers P."/>
            <person name="McDonald L.A."/>
            <person name="Utterback T.R."/>
            <person name="Fleischmann R.D."/>
            <person name="Nierman W.C."/>
            <person name="White O."/>
            <person name="Salzberg S.L."/>
            <person name="Smith H.O."/>
            <person name="Colwell R.R."/>
            <person name="Mekalanos J.J."/>
            <person name="Venter J.C."/>
            <person name="Fraser C.M."/>
        </authorList>
    </citation>
    <scope>NUCLEOTIDE SEQUENCE [LARGE SCALE GENOMIC DNA]</scope>
    <source>
        <strain>ATCC 39315 / El Tor Inaba N16961</strain>
    </source>
</reference>
<protein>
    <recommendedName>
        <fullName evidence="1">4-hydroxy-3-methylbut-2-en-1-yl diphosphate synthase (flavodoxin)</fullName>
        <ecNumber evidence="1">1.17.7.3</ecNumber>
    </recommendedName>
    <alternativeName>
        <fullName evidence="1">1-hydroxy-2-methyl-2-(E)-butenyl 4-diphosphate synthase</fullName>
    </alternativeName>
</protein>
<organism>
    <name type="scientific">Vibrio cholerae serotype O1 (strain ATCC 39315 / El Tor Inaba N16961)</name>
    <dbReference type="NCBI Taxonomy" id="243277"/>
    <lineage>
        <taxon>Bacteria</taxon>
        <taxon>Pseudomonadati</taxon>
        <taxon>Pseudomonadota</taxon>
        <taxon>Gammaproteobacteria</taxon>
        <taxon>Vibrionales</taxon>
        <taxon>Vibrionaceae</taxon>
        <taxon>Vibrio</taxon>
    </lineage>
</organism>
<evidence type="ECO:0000255" key="1">
    <source>
        <dbReference type="HAMAP-Rule" id="MF_00159"/>
    </source>
</evidence>
<evidence type="ECO:0000305" key="2"/>
<dbReference type="EC" id="1.17.7.3" evidence="1"/>
<dbReference type="EMBL" id="AE003852">
    <property type="protein sequence ID" value="AAF93924.1"/>
    <property type="status" value="ALT_INIT"/>
    <property type="molecule type" value="Genomic_DNA"/>
</dbReference>
<dbReference type="PIR" id="F82283">
    <property type="entry name" value="F82283"/>
</dbReference>
<dbReference type="RefSeq" id="NP_230408.1">
    <property type="nucleotide sequence ID" value="NC_002505.1"/>
</dbReference>
<dbReference type="RefSeq" id="WP_001163464.1">
    <property type="nucleotide sequence ID" value="NZ_LT906614.1"/>
</dbReference>
<dbReference type="SMR" id="Q9KTX1"/>
<dbReference type="STRING" id="243277.VC_0759"/>
<dbReference type="DNASU" id="2615302"/>
<dbReference type="EnsemblBacteria" id="AAF93924">
    <property type="protein sequence ID" value="AAF93924"/>
    <property type="gene ID" value="VC_0759"/>
</dbReference>
<dbReference type="GeneID" id="69720491"/>
<dbReference type="KEGG" id="vch:VC_0759"/>
<dbReference type="PATRIC" id="fig|243277.26.peg.723"/>
<dbReference type="eggNOG" id="COG0821">
    <property type="taxonomic scope" value="Bacteria"/>
</dbReference>
<dbReference type="HOGENOM" id="CLU_042258_0_0_6"/>
<dbReference type="UniPathway" id="UPA00056">
    <property type="reaction ID" value="UER00096"/>
</dbReference>
<dbReference type="Proteomes" id="UP000000584">
    <property type="component" value="Chromosome 1"/>
</dbReference>
<dbReference type="GO" id="GO:0051539">
    <property type="term" value="F:4 iron, 4 sulfur cluster binding"/>
    <property type="evidence" value="ECO:0007669"/>
    <property type="project" value="UniProtKB-UniRule"/>
</dbReference>
<dbReference type="GO" id="GO:0046429">
    <property type="term" value="F:4-hydroxy-3-methylbut-2-en-1-yl diphosphate synthase activity (ferredoxin)"/>
    <property type="evidence" value="ECO:0000318"/>
    <property type="project" value="GO_Central"/>
</dbReference>
<dbReference type="GO" id="GO:0141197">
    <property type="term" value="F:4-hydroxy-3-methylbut-2-enyl-diphosphate synthase activity (flavodoxin)"/>
    <property type="evidence" value="ECO:0007669"/>
    <property type="project" value="UniProtKB-EC"/>
</dbReference>
<dbReference type="GO" id="GO:0005506">
    <property type="term" value="F:iron ion binding"/>
    <property type="evidence" value="ECO:0007669"/>
    <property type="project" value="InterPro"/>
</dbReference>
<dbReference type="GO" id="GO:0019288">
    <property type="term" value="P:isopentenyl diphosphate biosynthetic process, methylerythritol 4-phosphate pathway"/>
    <property type="evidence" value="ECO:0000318"/>
    <property type="project" value="GO_Central"/>
</dbReference>
<dbReference type="GO" id="GO:0016114">
    <property type="term" value="P:terpenoid biosynthetic process"/>
    <property type="evidence" value="ECO:0007669"/>
    <property type="project" value="InterPro"/>
</dbReference>
<dbReference type="FunFam" id="3.20.20.20:FF:000001">
    <property type="entry name" value="4-hydroxy-3-methylbut-2-en-1-yl diphosphate synthase (flavodoxin)"/>
    <property type="match status" value="1"/>
</dbReference>
<dbReference type="FunFam" id="3.30.413.10:FF:000002">
    <property type="entry name" value="4-hydroxy-3-methylbut-2-en-1-yl diphosphate synthase (flavodoxin)"/>
    <property type="match status" value="1"/>
</dbReference>
<dbReference type="Gene3D" id="3.20.20.20">
    <property type="entry name" value="Dihydropteroate synthase-like"/>
    <property type="match status" value="1"/>
</dbReference>
<dbReference type="Gene3D" id="3.30.413.10">
    <property type="entry name" value="Sulfite Reductase Hemoprotein, domain 1"/>
    <property type="match status" value="1"/>
</dbReference>
<dbReference type="HAMAP" id="MF_00159">
    <property type="entry name" value="IspG"/>
    <property type="match status" value="1"/>
</dbReference>
<dbReference type="InterPro" id="IPR011005">
    <property type="entry name" value="Dihydropteroate_synth-like_sf"/>
</dbReference>
<dbReference type="InterPro" id="IPR016425">
    <property type="entry name" value="IspG_bac"/>
</dbReference>
<dbReference type="InterPro" id="IPR004588">
    <property type="entry name" value="IspG_bac-typ"/>
</dbReference>
<dbReference type="InterPro" id="IPR045854">
    <property type="entry name" value="NO2/SO3_Rdtase_4Fe4S_sf"/>
</dbReference>
<dbReference type="NCBIfam" id="TIGR00612">
    <property type="entry name" value="ispG_gcpE"/>
    <property type="match status" value="1"/>
</dbReference>
<dbReference type="NCBIfam" id="NF001540">
    <property type="entry name" value="PRK00366.1"/>
    <property type="match status" value="1"/>
</dbReference>
<dbReference type="PANTHER" id="PTHR30454">
    <property type="entry name" value="4-HYDROXY-3-METHYLBUT-2-EN-1-YL DIPHOSPHATE SYNTHASE"/>
    <property type="match status" value="1"/>
</dbReference>
<dbReference type="PANTHER" id="PTHR30454:SF0">
    <property type="entry name" value="4-HYDROXY-3-METHYLBUT-2-EN-1-YL DIPHOSPHATE SYNTHASE (FERREDOXIN), CHLOROPLASTIC"/>
    <property type="match status" value="1"/>
</dbReference>
<dbReference type="Pfam" id="PF04551">
    <property type="entry name" value="GcpE"/>
    <property type="match status" value="1"/>
</dbReference>
<dbReference type="PIRSF" id="PIRSF004640">
    <property type="entry name" value="IspG"/>
    <property type="match status" value="1"/>
</dbReference>
<dbReference type="SUPFAM" id="SSF51717">
    <property type="entry name" value="Dihydropteroate synthetase-like"/>
    <property type="match status" value="1"/>
</dbReference>
<dbReference type="SUPFAM" id="SSF56014">
    <property type="entry name" value="Nitrite and sulphite reductase 4Fe-4S domain-like"/>
    <property type="match status" value="1"/>
</dbReference>
<name>ISPG_VIBCH</name>
<comment type="function">
    <text evidence="1">Converts 2C-methyl-D-erythritol 2,4-cyclodiphosphate (ME-2,4cPP) into 1-hydroxy-2-methyl-2-(E)-butenyl 4-diphosphate.</text>
</comment>
<comment type="catalytic activity">
    <reaction evidence="1">
        <text>(2E)-4-hydroxy-3-methylbut-2-enyl diphosphate + oxidized [flavodoxin] + H2O + 2 H(+) = 2-C-methyl-D-erythritol 2,4-cyclic diphosphate + reduced [flavodoxin]</text>
        <dbReference type="Rhea" id="RHEA:43604"/>
        <dbReference type="Rhea" id="RHEA-COMP:10622"/>
        <dbReference type="Rhea" id="RHEA-COMP:10623"/>
        <dbReference type="ChEBI" id="CHEBI:15377"/>
        <dbReference type="ChEBI" id="CHEBI:15378"/>
        <dbReference type="ChEBI" id="CHEBI:57618"/>
        <dbReference type="ChEBI" id="CHEBI:58210"/>
        <dbReference type="ChEBI" id="CHEBI:58483"/>
        <dbReference type="ChEBI" id="CHEBI:128753"/>
        <dbReference type="EC" id="1.17.7.3"/>
    </reaction>
</comment>
<comment type="cofactor">
    <cofactor evidence="1">
        <name>[4Fe-4S] cluster</name>
        <dbReference type="ChEBI" id="CHEBI:49883"/>
    </cofactor>
    <text evidence="1">Binds 1 [4Fe-4S] cluster.</text>
</comment>
<comment type="pathway">
    <text evidence="1">Isoprenoid biosynthesis; isopentenyl diphosphate biosynthesis via DXP pathway; isopentenyl diphosphate from 1-deoxy-D-xylulose 5-phosphate: step 5/6.</text>
</comment>
<comment type="similarity">
    <text evidence="1">Belongs to the IspG family.</text>
</comment>
<comment type="sequence caution" evidence="2">
    <conflict type="erroneous initiation">
        <sequence resource="EMBL-CDS" id="AAF93924"/>
    </conflict>
</comment>
<keyword id="KW-0004">4Fe-4S</keyword>
<keyword id="KW-0408">Iron</keyword>
<keyword id="KW-0411">Iron-sulfur</keyword>
<keyword id="KW-0414">Isoprene biosynthesis</keyword>
<keyword id="KW-0479">Metal-binding</keyword>
<keyword id="KW-0560">Oxidoreductase</keyword>
<keyword id="KW-1185">Reference proteome</keyword>
<feature type="chain" id="PRO_0000190651" description="4-hydroxy-3-methylbut-2-en-1-yl diphosphate synthase (flavodoxin)">
    <location>
        <begin position="1"/>
        <end position="374"/>
    </location>
</feature>
<feature type="binding site" evidence="1">
    <location>
        <position position="270"/>
    </location>
    <ligand>
        <name>[4Fe-4S] cluster</name>
        <dbReference type="ChEBI" id="CHEBI:49883"/>
    </ligand>
</feature>
<feature type="binding site" evidence="1">
    <location>
        <position position="273"/>
    </location>
    <ligand>
        <name>[4Fe-4S] cluster</name>
        <dbReference type="ChEBI" id="CHEBI:49883"/>
    </ligand>
</feature>
<feature type="binding site" evidence="1">
    <location>
        <position position="305"/>
    </location>
    <ligand>
        <name>[4Fe-4S] cluster</name>
        <dbReference type="ChEBI" id="CHEBI:49883"/>
    </ligand>
</feature>
<feature type="binding site" evidence="1">
    <location>
        <position position="312"/>
    </location>
    <ligand>
        <name>[4Fe-4S] cluster</name>
        <dbReference type="ChEBI" id="CHEBI:49883"/>
    </ligand>
</feature>
<proteinExistence type="inferred from homology"/>
<gene>
    <name evidence="1" type="primary">ispG</name>
    <name type="ordered locus">VC_0759</name>
</gene>
<accession>Q9KTX1</accession>